<reference key="1">
    <citation type="journal article" date="2005" name="Science">
        <title>The transcriptional landscape of the mammalian genome.</title>
        <authorList>
            <person name="Carninci P."/>
            <person name="Kasukawa T."/>
            <person name="Katayama S."/>
            <person name="Gough J."/>
            <person name="Frith M.C."/>
            <person name="Maeda N."/>
            <person name="Oyama R."/>
            <person name="Ravasi T."/>
            <person name="Lenhard B."/>
            <person name="Wells C."/>
            <person name="Kodzius R."/>
            <person name="Shimokawa K."/>
            <person name="Bajic V.B."/>
            <person name="Brenner S.E."/>
            <person name="Batalov S."/>
            <person name="Forrest A.R."/>
            <person name="Zavolan M."/>
            <person name="Davis M.J."/>
            <person name="Wilming L.G."/>
            <person name="Aidinis V."/>
            <person name="Allen J.E."/>
            <person name="Ambesi-Impiombato A."/>
            <person name="Apweiler R."/>
            <person name="Aturaliya R.N."/>
            <person name="Bailey T.L."/>
            <person name="Bansal M."/>
            <person name="Baxter L."/>
            <person name="Beisel K.W."/>
            <person name="Bersano T."/>
            <person name="Bono H."/>
            <person name="Chalk A.M."/>
            <person name="Chiu K.P."/>
            <person name="Choudhary V."/>
            <person name="Christoffels A."/>
            <person name="Clutterbuck D.R."/>
            <person name="Crowe M.L."/>
            <person name="Dalla E."/>
            <person name="Dalrymple B.P."/>
            <person name="de Bono B."/>
            <person name="Della Gatta G."/>
            <person name="di Bernardo D."/>
            <person name="Down T."/>
            <person name="Engstrom P."/>
            <person name="Fagiolini M."/>
            <person name="Faulkner G."/>
            <person name="Fletcher C.F."/>
            <person name="Fukushima T."/>
            <person name="Furuno M."/>
            <person name="Futaki S."/>
            <person name="Gariboldi M."/>
            <person name="Georgii-Hemming P."/>
            <person name="Gingeras T.R."/>
            <person name="Gojobori T."/>
            <person name="Green R.E."/>
            <person name="Gustincich S."/>
            <person name="Harbers M."/>
            <person name="Hayashi Y."/>
            <person name="Hensch T.K."/>
            <person name="Hirokawa N."/>
            <person name="Hill D."/>
            <person name="Huminiecki L."/>
            <person name="Iacono M."/>
            <person name="Ikeo K."/>
            <person name="Iwama A."/>
            <person name="Ishikawa T."/>
            <person name="Jakt M."/>
            <person name="Kanapin A."/>
            <person name="Katoh M."/>
            <person name="Kawasawa Y."/>
            <person name="Kelso J."/>
            <person name="Kitamura H."/>
            <person name="Kitano H."/>
            <person name="Kollias G."/>
            <person name="Krishnan S.P."/>
            <person name="Kruger A."/>
            <person name="Kummerfeld S.K."/>
            <person name="Kurochkin I.V."/>
            <person name="Lareau L.F."/>
            <person name="Lazarevic D."/>
            <person name="Lipovich L."/>
            <person name="Liu J."/>
            <person name="Liuni S."/>
            <person name="McWilliam S."/>
            <person name="Madan Babu M."/>
            <person name="Madera M."/>
            <person name="Marchionni L."/>
            <person name="Matsuda H."/>
            <person name="Matsuzawa S."/>
            <person name="Miki H."/>
            <person name="Mignone F."/>
            <person name="Miyake S."/>
            <person name="Morris K."/>
            <person name="Mottagui-Tabar S."/>
            <person name="Mulder N."/>
            <person name="Nakano N."/>
            <person name="Nakauchi H."/>
            <person name="Ng P."/>
            <person name="Nilsson R."/>
            <person name="Nishiguchi S."/>
            <person name="Nishikawa S."/>
            <person name="Nori F."/>
            <person name="Ohara O."/>
            <person name="Okazaki Y."/>
            <person name="Orlando V."/>
            <person name="Pang K.C."/>
            <person name="Pavan W.J."/>
            <person name="Pavesi G."/>
            <person name="Pesole G."/>
            <person name="Petrovsky N."/>
            <person name="Piazza S."/>
            <person name="Reed J."/>
            <person name="Reid J.F."/>
            <person name="Ring B.Z."/>
            <person name="Ringwald M."/>
            <person name="Rost B."/>
            <person name="Ruan Y."/>
            <person name="Salzberg S.L."/>
            <person name="Sandelin A."/>
            <person name="Schneider C."/>
            <person name="Schoenbach C."/>
            <person name="Sekiguchi K."/>
            <person name="Semple C.A."/>
            <person name="Seno S."/>
            <person name="Sessa L."/>
            <person name="Sheng Y."/>
            <person name="Shibata Y."/>
            <person name="Shimada H."/>
            <person name="Shimada K."/>
            <person name="Silva D."/>
            <person name="Sinclair B."/>
            <person name="Sperling S."/>
            <person name="Stupka E."/>
            <person name="Sugiura K."/>
            <person name="Sultana R."/>
            <person name="Takenaka Y."/>
            <person name="Taki K."/>
            <person name="Tammoja K."/>
            <person name="Tan S.L."/>
            <person name="Tang S."/>
            <person name="Taylor M.S."/>
            <person name="Tegner J."/>
            <person name="Teichmann S.A."/>
            <person name="Ueda H.R."/>
            <person name="van Nimwegen E."/>
            <person name="Verardo R."/>
            <person name="Wei C.L."/>
            <person name="Yagi K."/>
            <person name="Yamanishi H."/>
            <person name="Zabarovsky E."/>
            <person name="Zhu S."/>
            <person name="Zimmer A."/>
            <person name="Hide W."/>
            <person name="Bult C."/>
            <person name="Grimmond S.M."/>
            <person name="Teasdale R.D."/>
            <person name="Liu E.T."/>
            <person name="Brusic V."/>
            <person name="Quackenbush J."/>
            <person name="Wahlestedt C."/>
            <person name="Mattick J.S."/>
            <person name="Hume D.A."/>
            <person name="Kai C."/>
            <person name="Sasaki D."/>
            <person name="Tomaru Y."/>
            <person name="Fukuda S."/>
            <person name="Kanamori-Katayama M."/>
            <person name="Suzuki M."/>
            <person name="Aoki J."/>
            <person name="Arakawa T."/>
            <person name="Iida J."/>
            <person name="Imamura K."/>
            <person name="Itoh M."/>
            <person name="Kato T."/>
            <person name="Kawaji H."/>
            <person name="Kawagashira N."/>
            <person name="Kawashima T."/>
            <person name="Kojima M."/>
            <person name="Kondo S."/>
            <person name="Konno H."/>
            <person name="Nakano K."/>
            <person name="Ninomiya N."/>
            <person name="Nishio T."/>
            <person name="Okada M."/>
            <person name="Plessy C."/>
            <person name="Shibata K."/>
            <person name="Shiraki T."/>
            <person name="Suzuki S."/>
            <person name="Tagami M."/>
            <person name="Waki K."/>
            <person name="Watahiki A."/>
            <person name="Okamura-Oho Y."/>
            <person name="Suzuki H."/>
            <person name="Kawai J."/>
            <person name="Hayashizaki Y."/>
        </authorList>
    </citation>
    <scope>NUCLEOTIDE SEQUENCE [LARGE SCALE MRNA]</scope>
    <source>
        <strain>C57BL/6J</strain>
        <strain>NOD</strain>
        <tissue>Extraembryonic tissue</tissue>
        <tissue>Mammary gland</tissue>
        <tissue>Placenta</tissue>
        <tissue>Testis</tissue>
        <tissue>Thymus</tissue>
    </source>
</reference>
<reference key="2">
    <citation type="journal article" date="2009" name="PLoS Biol.">
        <title>Lineage-specific biology revealed by a finished genome assembly of the mouse.</title>
        <authorList>
            <person name="Church D.M."/>
            <person name="Goodstadt L."/>
            <person name="Hillier L.W."/>
            <person name="Zody M.C."/>
            <person name="Goldstein S."/>
            <person name="She X."/>
            <person name="Bult C.J."/>
            <person name="Agarwala R."/>
            <person name="Cherry J.L."/>
            <person name="DiCuccio M."/>
            <person name="Hlavina W."/>
            <person name="Kapustin Y."/>
            <person name="Meric P."/>
            <person name="Maglott D."/>
            <person name="Birtle Z."/>
            <person name="Marques A.C."/>
            <person name="Graves T."/>
            <person name="Zhou S."/>
            <person name="Teague B."/>
            <person name="Potamousis K."/>
            <person name="Churas C."/>
            <person name="Place M."/>
            <person name="Herschleb J."/>
            <person name="Runnheim R."/>
            <person name="Forrest D."/>
            <person name="Amos-Landgraf J."/>
            <person name="Schwartz D.C."/>
            <person name="Cheng Z."/>
            <person name="Lindblad-Toh K."/>
            <person name="Eichler E.E."/>
            <person name="Ponting C.P."/>
        </authorList>
    </citation>
    <scope>NUCLEOTIDE SEQUENCE [LARGE SCALE GENOMIC DNA]</scope>
    <source>
        <strain>C57BL/6J</strain>
    </source>
</reference>
<reference key="3">
    <citation type="journal article" date="2004" name="Genome Res.">
        <title>The status, quality, and expansion of the NIH full-length cDNA project: the Mammalian Gene Collection (MGC).</title>
        <authorList>
            <consortium name="The MGC Project Team"/>
        </authorList>
    </citation>
    <scope>NUCLEOTIDE SEQUENCE [LARGE SCALE MRNA]</scope>
    <source>
        <strain>FVB/N</strain>
        <tissue>Mammary tumor</tissue>
    </source>
</reference>
<reference key="4">
    <citation type="journal article" date="2010" name="Cell">
        <title>A tissue-specific atlas of mouse protein phosphorylation and expression.</title>
        <authorList>
            <person name="Huttlin E.L."/>
            <person name="Jedrychowski M.P."/>
            <person name="Elias J.E."/>
            <person name="Goswami T."/>
            <person name="Rad R."/>
            <person name="Beausoleil S.A."/>
            <person name="Villen J."/>
            <person name="Haas W."/>
            <person name="Sowa M.E."/>
            <person name="Gygi S.P."/>
        </authorList>
    </citation>
    <scope>IDENTIFICATION BY MASS SPECTROMETRY [LARGE SCALE ANALYSIS]</scope>
    <source>
        <tissue>Spleen</tissue>
        <tissue>Testis</tissue>
    </source>
</reference>
<dbReference type="EC" id="5.4.99.25" evidence="1"/>
<dbReference type="EMBL" id="AK017063">
    <property type="protein sequence ID" value="BAB30576.1"/>
    <property type="molecule type" value="mRNA"/>
</dbReference>
<dbReference type="EMBL" id="AK012737">
    <property type="protein sequence ID" value="BAB28439.1"/>
    <property type="molecule type" value="mRNA"/>
</dbReference>
<dbReference type="EMBL" id="AK028368">
    <property type="protein sequence ID" value="BAC25908.1"/>
    <property type="molecule type" value="mRNA"/>
</dbReference>
<dbReference type="EMBL" id="AK029866">
    <property type="protein sequence ID" value="BAC26650.1"/>
    <property type="molecule type" value="mRNA"/>
</dbReference>
<dbReference type="EMBL" id="AK088562">
    <property type="protein sequence ID" value="BAC40426.1"/>
    <property type="molecule type" value="mRNA"/>
</dbReference>
<dbReference type="EMBL" id="AK145055">
    <property type="protein sequence ID" value="BAE26208.1"/>
    <property type="molecule type" value="mRNA"/>
</dbReference>
<dbReference type="EMBL" id="AL672049">
    <property type="status" value="NOT_ANNOTATED_CDS"/>
    <property type="molecule type" value="Genomic_DNA"/>
</dbReference>
<dbReference type="EMBL" id="AL805916">
    <property type="status" value="NOT_ANNOTATED_CDS"/>
    <property type="molecule type" value="Genomic_DNA"/>
</dbReference>
<dbReference type="EMBL" id="BX255874">
    <property type="status" value="NOT_ANNOTATED_CDS"/>
    <property type="molecule type" value="Genomic_DNA"/>
</dbReference>
<dbReference type="EMBL" id="BC025555">
    <property type="protein sequence ID" value="AAH25555.1"/>
    <property type="molecule type" value="mRNA"/>
</dbReference>
<dbReference type="CCDS" id="CCDS24479.1"/>
<dbReference type="RefSeq" id="NP_001028826.1">
    <property type="nucleotide sequence ID" value="NM_001033654.3"/>
</dbReference>
<dbReference type="RefSeq" id="NP_001388067.1">
    <property type="nucleotide sequence ID" value="NM_001401138.1"/>
</dbReference>
<dbReference type="RefSeq" id="NP_001388068.1">
    <property type="nucleotide sequence ID" value="NM_001401139.1"/>
</dbReference>
<dbReference type="RefSeq" id="NP_001388069.1">
    <property type="nucleotide sequence ID" value="NM_001401140.1"/>
</dbReference>
<dbReference type="RefSeq" id="NP_082580.1">
    <property type="nucleotide sequence ID" value="NM_028304.4"/>
</dbReference>
<dbReference type="RefSeq" id="NP_083232.1">
    <property type="nucleotide sequence ID" value="NM_028956.5"/>
</dbReference>
<dbReference type="SMR" id="Q9D3U0"/>
<dbReference type="FunCoup" id="Q9D3U0">
    <property type="interactions" value="4155"/>
</dbReference>
<dbReference type="STRING" id="10090.ENSMUSP00000050395"/>
<dbReference type="iPTMnet" id="Q9D3U0"/>
<dbReference type="PhosphoSitePlus" id="Q9D3U0"/>
<dbReference type="SwissPalm" id="Q9D3U0"/>
<dbReference type="jPOST" id="Q9D3U0"/>
<dbReference type="PaxDb" id="10090-ENSMUSP00000050395"/>
<dbReference type="PeptideAtlas" id="Q9D3U0"/>
<dbReference type="ProteomicsDB" id="302035"/>
<dbReference type="Pumba" id="Q9D3U0"/>
<dbReference type="Antibodypedia" id="47429">
    <property type="antibodies" value="112 antibodies from 17 providers"/>
</dbReference>
<dbReference type="Ensembl" id="ENSMUST00000020520.11">
    <property type="protein sequence ID" value="ENSMUSP00000020520.5"/>
    <property type="gene ID" value="ENSMUSG00000020280.13"/>
</dbReference>
<dbReference type="Ensembl" id="ENSMUST00000058163.11">
    <property type="protein sequence ID" value="ENSMUSP00000050395.5"/>
    <property type="gene ID" value="ENSMUSG00000020280.13"/>
</dbReference>
<dbReference type="Ensembl" id="ENSMUST00000109525.8">
    <property type="protein sequence ID" value="ENSMUSP00000105151.2"/>
    <property type="gene ID" value="ENSMUSG00000020280.13"/>
</dbReference>
<dbReference type="GeneID" id="74467"/>
<dbReference type="KEGG" id="mmu:74467"/>
<dbReference type="UCSC" id="uc007ifk.1">
    <property type="organism name" value="mouse"/>
</dbReference>
<dbReference type="AGR" id="MGI:1921717"/>
<dbReference type="CTD" id="150962"/>
<dbReference type="MGI" id="MGI:1921717">
    <property type="gene designation" value="Pus10"/>
</dbReference>
<dbReference type="VEuPathDB" id="HostDB:ENSMUSG00000020280"/>
<dbReference type="eggNOG" id="KOG2364">
    <property type="taxonomic scope" value="Eukaryota"/>
</dbReference>
<dbReference type="GeneTree" id="ENSGT00390000007529"/>
<dbReference type="HOGENOM" id="CLU_028780_2_0_1"/>
<dbReference type="InParanoid" id="Q9D3U0"/>
<dbReference type="OMA" id="LVISCQR"/>
<dbReference type="OrthoDB" id="271937at2759"/>
<dbReference type="PhylomeDB" id="Q9D3U0"/>
<dbReference type="TreeFam" id="TF106109"/>
<dbReference type="BioGRID-ORCS" id="74467">
    <property type="hits" value="4 hits in 78 CRISPR screens"/>
</dbReference>
<dbReference type="ChiTaRS" id="Pus10">
    <property type="organism name" value="mouse"/>
</dbReference>
<dbReference type="PRO" id="PR:Q9D3U0"/>
<dbReference type="Proteomes" id="UP000000589">
    <property type="component" value="Chromosome 11"/>
</dbReference>
<dbReference type="RNAct" id="Q9D3U0">
    <property type="molecule type" value="protein"/>
</dbReference>
<dbReference type="Bgee" id="ENSMUSG00000020280">
    <property type="expression patterns" value="Expressed in spermatocyte and 242 other cell types or tissues"/>
</dbReference>
<dbReference type="ExpressionAtlas" id="Q9D3U0">
    <property type="expression patterns" value="baseline and differential"/>
</dbReference>
<dbReference type="GO" id="GO:0005737">
    <property type="term" value="C:cytoplasm"/>
    <property type="evidence" value="ECO:0000250"/>
    <property type="project" value="UniProtKB"/>
</dbReference>
<dbReference type="GO" id="GO:0005739">
    <property type="term" value="C:mitochondrion"/>
    <property type="evidence" value="ECO:0007669"/>
    <property type="project" value="UniProtKB-SubCell"/>
</dbReference>
<dbReference type="GO" id="GO:0005634">
    <property type="term" value="C:nucleus"/>
    <property type="evidence" value="ECO:0000250"/>
    <property type="project" value="UniProtKB"/>
</dbReference>
<dbReference type="GO" id="GO:0046872">
    <property type="term" value="F:metal ion binding"/>
    <property type="evidence" value="ECO:0007669"/>
    <property type="project" value="UniProtKB-KW"/>
</dbReference>
<dbReference type="GO" id="GO:0070878">
    <property type="term" value="F:primary miRNA binding"/>
    <property type="evidence" value="ECO:0000250"/>
    <property type="project" value="UniProtKB"/>
</dbReference>
<dbReference type="GO" id="GO:0009982">
    <property type="term" value="F:pseudouridine synthase activity"/>
    <property type="evidence" value="ECO:0000250"/>
    <property type="project" value="UniProtKB"/>
</dbReference>
<dbReference type="GO" id="GO:0106029">
    <property type="term" value="F:tRNA pseudouridine synthase activity"/>
    <property type="evidence" value="ECO:0000250"/>
    <property type="project" value="UniProtKB"/>
</dbReference>
<dbReference type="GO" id="GO:0160148">
    <property type="term" value="F:tRNA pseudouridine(55) synthase activity"/>
    <property type="evidence" value="ECO:0007669"/>
    <property type="project" value="UniProtKB-EC"/>
</dbReference>
<dbReference type="GO" id="GO:0031053">
    <property type="term" value="P:primary miRNA processing"/>
    <property type="evidence" value="ECO:0000250"/>
    <property type="project" value="UniProtKB"/>
</dbReference>
<dbReference type="GO" id="GO:0031119">
    <property type="term" value="P:tRNA pseudouridine synthesis"/>
    <property type="evidence" value="ECO:0000250"/>
    <property type="project" value="UniProtKB"/>
</dbReference>
<dbReference type="FunFam" id="1.10.10.2050:FF:000001">
    <property type="entry name" value="putative tRNA pseudouridine synthase Pus10"/>
    <property type="match status" value="1"/>
</dbReference>
<dbReference type="FunFam" id="3.30.70.2510:FF:000001">
    <property type="entry name" value="tRNA pseudouridine synthase Pus10"/>
    <property type="match status" value="1"/>
</dbReference>
<dbReference type="FunFam" id="3.30.70.3190:FF:000001">
    <property type="entry name" value="tRNA pseudouridine synthase Pus10"/>
    <property type="match status" value="1"/>
</dbReference>
<dbReference type="Gene3D" id="1.10.10.2050">
    <property type="match status" value="1"/>
</dbReference>
<dbReference type="Gene3D" id="3.30.70.2510">
    <property type="match status" value="1"/>
</dbReference>
<dbReference type="Gene3D" id="3.30.70.3190">
    <property type="match status" value="1"/>
</dbReference>
<dbReference type="InterPro" id="IPR020103">
    <property type="entry name" value="PsdUridine_synth_cat_dom_sf"/>
</dbReference>
<dbReference type="InterPro" id="IPR039894">
    <property type="entry name" value="Pus10-like"/>
</dbReference>
<dbReference type="InterPro" id="IPR048741">
    <property type="entry name" value="Pus10-like_C"/>
</dbReference>
<dbReference type="InterPro" id="IPR048742">
    <property type="entry name" value="Pus10_N_euk"/>
</dbReference>
<dbReference type="NCBIfam" id="TIGR01213">
    <property type="entry name" value="pseudo_Pus10arc"/>
    <property type="match status" value="1"/>
</dbReference>
<dbReference type="PANTHER" id="PTHR21568">
    <property type="entry name" value="TRNA PSEUDOURIDINE SYNTHASE PUS10"/>
    <property type="match status" value="1"/>
</dbReference>
<dbReference type="PANTHER" id="PTHR21568:SF0">
    <property type="entry name" value="TRNA PSEUDOURIDINE SYNTHASE PUS10"/>
    <property type="match status" value="1"/>
</dbReference>
<dbReference type="Pfam" id="PF21238">
    <property type="entry name" value="Pus10_C"/>
    <property type="match status" value="1"/>
</dbReference>
<dbReference type="Pfam" id="PF21237">
    <property type="entry name" value="Pus10_N_euk"/>
    <property type="match status" value="1"/>
</dbReference>
<dbReference type="SUPFAM" id="SSF55120">
    <property type="entry name" value="Pseudouridine synthase"/>
    <property type="match status" value="1"/>
</dbReference>
<sequence length="527" mass="59710">MLPLTEENKHVAQLLFSSGTCPRCILRFCGVDLPAPYKHPSKELLNELQKFLEPEKPELILEAPNPPLKKIRLHEDGIDNLSEDGKEGVSVTEDESMAEKPSKLRVCNVCLGILQEFCEKGFITKVCQKVEASGFEFTSVVLSVSFPPQLSVREHAAWLLVKQEMGKQSLSLGRNDVVQLKEAYKWITHPLFSEELGVPTDGKSLFEVSVVFAHPETAEDCHFLGEVCRDCFKPAKNKQSVFTRMAVLKALSKIKEEDFLGQFPCPPNSPKTVCTVLEVECTHGAVFVAGRYNKYSRNLPQTPWIIDGERKMESSVEELISDHLLAVFRAESFNFSSSGREDVDVRTLGNGRPFAVELLNPHRVHFTSQEMKELQQTINKSSDKIQVRDLQLVTREAIGHMKEGEEEKTKTYSALIWTNRAIQKKDIGFLDDLKDLKIDQKTPLRVLHRRPLAVRTRAIHSMKTHYLDEHHFRLHLKTQAGTYIKEFVHGDFGRTKPNLGSLMNVTADILELDVESVDVDWPPALDD</sequence>
<evidence type="ECO:0000250" key="1">
    <source>
        <dbReference type="UniProtKB" id="Q3MIT2"/>
    </source>
</evidence>
<evidence type="ECO:0000255" key="2"/>
<evidence type="ECO:0000305" key="3"/>
<evidence type="ECO:0000312" key="4">
    <source>
        <dbReference type="MGI" id="MGI:1921717"/>
    </source>
</evidence>
<protein>
    <recommendedName>
        <fullName>tRNA pseudouridine synthase Pus10</fullName>
        <ecNumber evidence="1">5.4.99.25</ecNumber>
    </recommendedName>
    <alternativeName>
        <fullName evidence="1">Coiled-coil domain-containing protein 139</fullName>
    </alternativeName>
    <alternativeName>
        <fullName>tRNA pseudouridine 55 synthase</fullName>
        <shortName>Psi55 synthase</shortName>
    </alternativeName>
    <alternativeName>
        <fullName>tRNA pseudouridylate synthase</fullName>
    </alternativeName>
    <alternativeName>
        <fullName>tRNA-uridine isomerase</fullName>
    </alternativeName>
</protein>
<accession>Q9D3U0</accession>
<accession>Q3UM90</accession>
<accession>Q8BSZ4</accession>
<accession>Q8CDM2</accession>
<accession>Q9CSI7</accession>
<feature type="chain" id="PRO_0000299023" description="tRNA pseudouridine synthase Pus10">
    <location>
        <begin position="1"/>
        <end position="527"/>
    </location>
</feature>
<feature type="region of interest" description="RNA binding forefinger loop" evidence="2">
    <location>
        <begin position="302"/>
        <end position="315"/>
    </location>
</feature>
<feature type="region of interest" description="RNA binding thumb loop" evidence="2">
    <location>
        <begin position="440"/>
        <end position="455"/>
    </location>
</feature>
<feature type="coiled-coil region" evidence="2">
    <location>
        <begin position="42"/>
        <end position="87"/>
    </location>
</feature>
<feature type="active site" description="Nucleophile" evidence="2">
    <location>
        <position position="342"/>
    </location>
</feature>
<feature type="binding site" evidence="1">
    <location>
        <position position="21"/>
    </location>
    <ligand>
        <name>Zn(2+)</name>
        <dbReference type="ChEBI" id="CHEBI:29105"/>
    </ligand>
</feature>
<feature type="binding site" evidence="1">
    <location>
        <position position="24"/>
    </location>
    <ligand>
        <name>Zn(2+)</name>
        <dbReference type="ChEBI" id="CHEBI:29105"/>
    </ligand>
</feature>
<feature type="binding site" evidence="1">
    <location>
        <position position="107"/>
    </location>
    <ligand>
        <name>Zn(2+)</name>
        <dbReference type="ChEBI" id="CHEBI:29105"/>
    </ligand>
</feature>
<feature type="binding site" evidence="1">
    <location>
        <position position="110"/>
    </location>
    <ligand>
        <name>Zn(2+)</name>
        <dbReference type="ChEBI" id="CHEBI:29105"/>
    </ligand>
</feature>
<feature type="modified residue" description="Phosphoserine" evidence="1">
    <location>
        <position position="82"/>
    </location>
</feature>
<feature type="sequence conflict" description="In Ref. 1; BAE26208." evidence="3" ref="1">
    <original>E</original>
    <variation>G</variation>
    <location>
        <position position="7"/>
    </location>
</feature>
<feature type="sequence conflict" description="In Ref. 1; BAE26208." evidence="3" ref="1">
    <original>H</original>
    <variation>R</variation>
    <location>
        <position position="10"/>
    </location>
</feature>
<feature type="sequence conflict" description="In Ref. 1; BAE26208." evidence="3" ref="1">
    <original>L</original>
    <variation>F</variation>
    <location>
        <position position="26"/>
    </location>
</feature>
<feature type="sequence conflict" description="In Ref. 1; BAB28439." evidence="3" ref="1">
    <original>P</original>
    <variation>S</variation>
    <location>
        <position position="215"/>
    </location>
</feature>
<feature type="sequence conflict" description="In Ref. 1; BAC26650." evidence="3" ref="1">
    <original>A</original>
    <variation>G</variation>
    <location>
        <position position="218"/>
    </location>
</feature>
<feature type="sequence conflict" description="In Ref. 1; BAB28439." evidence="3" ref="1">
    <original>D</original>
    <variation>G</variation>
    <location>
        <position position="258"/>
    </location>
</feature>
<feature type="sequence conflict" description="In Ref. 1; BAC26650." evidence="3" ref="1">
    <original>N</original>
    <variation>H</variation>
    <location>
        <position position="268"/>
    </location>
</feature>
<feature type="sequence conflict" description="In Ref. 1; BAB28439." evidence="3" ref="1">
    <original>S</original>
    <variation>L</variation>
    <location>
        <position position="269"/>
    </location>
</feature>
<feature type="sequence conflict" description="In Ref. 1; BAC26650." evidence="3" ref="1">
    <original>A</original>
    <variation>G</variation>
    <location>
        <position position="289"/>
    </location>
</feature>
<feature type="sequence conflict" description="In Ref. 1; BAE26208." evidence="3" ref="1">
    <original>R</original>
    <variation>K</variation>
    <location>
        <position position="329"/>
    </location>
</feature>
<feature type="sequence conflict" description="In Ref. 1; BAC25908." evidence="3" ref="1">
    <original>F</original>
    <variation>L</variation>
    <location>
        <position position="487"/>
    </location>
</feature>
<feature type="sequence conflict" description="In Ref. 1; BAC25908." evidence="3" ref="1">
    <original>P</original>
    <variation>T</variation>
    <location>
        <position position="522"/>
    </location>
</feature>
<gene>
    <name evidence="4" type="primary">Pus10</name>
    <name evidence="1" type="synonym">Ccdc139</name>
</gene>
<comment type="function">
    <text evidence="1">Protein with different functions depending on its subcellular location: involved in miRNA processing in the nucleus and acts as a tRNA pseudouridylate synthase in the cytoplasm. In the cytoplasm, acts as a pseudouridylate synthase by catalyzing synthesis of pseudouridine(54) and pseudouridine(55) from uracil-54 and uracil-55, respectively, in the psi GC loop of a subset of tRNAs. tRNA pseudouridylate synthase activity is enhanced by the presence of 1-methyladenosine at position 53-61 of tRNAs. Does not show tRNA pseudouridylate synthase activity in the nucleus. In the nucleus, promotes primary microRNAs (pri-miRNAs) processing independently of its RNA pseudouridylate synthase activity. Binds pri-miRNAs. Modulator of TRAIL/TNFSF10-induced cell death via activation of procaspase-8 and BID cleavage. Required for the progression of the apoptotic signal through intrinsic mitochondrial cell death.</text>
</comment>
<comment type="catalytic activity">
    <reaction evidence="1">
        <text>uridine(55) in tRNA = pseudouridine(55) in tRNA</text>
        <dbReference type="Rhea" id="RHEA:42532"/>
        <dbReference type="Rhea" id="RHEA-COMP:10101"/>
        <dbReference type="Rhea" id="RHEA-COMP:10102"/>
        <dbReference type="ChEBI" id="CHEBI:65314"/>
        <dbReference type="ChEBI" id="CHEBI:65315"/>
        <dbReference type="EC" id="5.4.99.25"/>
    </reaction>
    <physiologicalReaction direction="left-to-right" evidence="1">
        <dbReference type="Rhea" id="RHEA:42533"/>
    </physiologicalReaction>
</comment>
<comment type="catalytic activity">
    <reaction evidence="1">
        <text>uridine(54) in tRNA = pseudouridine(54) in tRNA</text>
        <dbReference type="Rhea" id="RHEA:57876"/>
        <dbReference type="Rhea" id="RHEA-COMP:10193"/>
        <dbReference type="Rhea" id="RHEA-COMP:14141"/>
        <dbReference type="ChEBI" id="CHEBI:65314"/>
        <dbReference type="ChEBI" id="CHEBI:65315"/>
    </reaction>
    <physiologicalReaction direction="left-to-right" evidence="1">
        <dbReference type="Rhea" id="RHEA:57877"/>
    </physiologicalReaction>
</comment>
<comment type="subunit">
    <text evidence="1">Interacts with components of the microprocessor complex DROSHA and DGCR8.</text>
</comment>
<comment type="subcellular location">
    <subcellularLocation>
        <location evidence="1">Nucleus</location>
    </subcellularLocation>
    <subcellularLocation>
        <location evidence="1">Cytoplasm</location>
    </subcellularLocation>
    <subcellularLocation>
        <location evidence="1">Mitochondrion</location>
    </subcellularLocation>
    <text evidence="1">Localizes mainly in the nucleus. tRNA pseudouridylate synthase activity is restricted to the cytoplasm. Translocates from nucleus to mitochondria during TRAIL-induced apoptosis.</text>
</comment>
<comment type="PTM">
    <text evidence="1">Proteolytically cleaved during TRAIL-induced cell death. Cleaved, in vitro, either by caspase-3 (CASP3) or caspase-8 (CASP8).</text>
</comment>
<comment type="similarity">
    <text evidence="3">Belongs to the pseudouridine synthase Pus10 family.</text>
</comment>
<organism>
    <name type="scientific">Mus musculus</name>
    <name type="common">Mouse</name>
    <dbReference type="NCBI Taxonomy" id="10090"/>
    <lineage>
        <taxon>Eukaryota</taxon>
        <taxon>Metazoa</taxon>
        <taxon>Chordata</taxon>
        <taxon>Craniata</taxon>
        <taxon>Vertebrata</taxon>
        <taxon>Euteleostomi</taxon>
        <taxon>Mammalia</taxon>
        <taxon>Eutheria</taxon>
        <taxon>Euarchontoglires</taxon>
        <taxon>Glires</taxon>
        <taxon>Rodentia</taxon>
        <taxon>Myomorpha</taxon>
        <taxon>Muroidea</taxon>
        <taxon>Muridae</taxon>
        <taxon>Murinae</taxon>
        <taxon>Mus</taxon>
        <taxon>Mus</taxon>
    </lineage>
</organism>
<keyword id="KW-0175">Coiled coil</keyword>
<keyword id="KW-0963">Cytoplasm</keyword>
<keyword id="KW-0413">Isomerase</keyword>
<keyword id="KW-0479">Metal-binding</keyword>
<keyword id="KW-0496">Mitochondrion</keyword>
<keyword id="KW-0539">Nucleus</keyword>
<keyword id="KW-0597">Phosphoprotein</keyword>
<keyword id="KW-1185">Reference proteome</keyword>
<keyword id="KW-0819">tRNA processing</keyword>
<keyword id="KW-0862">Zinc</keyword>
<name>PUS10_MOUSE</name>
<proteinExistence type="evidence at protein level"/>